<feature type="chain" id="PRO_0000437601" description="Efflux pump terJ">
    <location>
        <begin position="1"/>
        <end position="518"/>
    </location>
</feature>
<feature type="transmembrane region" description="Helical" evidence="1">
    <location>
        <begin position="43"/>
        <end position="63"/>
    </location>
</feature>
<feature type="transmembrane region" description="Helical" evidence="1">
    <location>
        <begin position="82"/>
        <end position="102"/>
    </location>
</feature>
<feature type="transmembrane region" description="Helical" evidence="1">
    <location>
        <begin position="112"/>
        <end position="132"/>
    </location>
</feature>
<feature type="transmembrane region" description="Helical" evidence="1">
    <location>
        <begin position="135"/>
        <end position="155"/>
    </location>
</feature>
<feature type="transmembrane region" description="Helical" evidence="1">
    <location>
        <begin position="177"/>
        <end position="197"/>
    </location>
</feature>
<feature type="transmembrane region" description="Helical" evidence="1">
    <location>
        <begin position="204"/>
        <end position="224"/>
    </location>
</feature>
<feature type="transmembrane region" description="Helical" evidence="1">
    <location>
        <begin position="244"/>
        <end position="264"/>
    </location>
</feature>
<feature type="transmembrane region" description="Helical" evidence="1">
    <location>
        <begin position="272"/>
        <end position="292"/>
    </location>
</feature>
<feature type="transmembrane region" description="Helical" evidence="1">
    <location>
        <begin position="311"/>
        <end position="331"/>
    </location>
</feature>
<feature type="transmembrane region" description="Helical" evidence="1">
    <location>
        <begin position="339"/>
        <end position="359"/>
    </location>
</feature>
<feature type="transmembrane region" description="Helical" evidence="1">
    <location>
        <begin position="364"/>
        <end position="384"/>
    </location>
</feature>
<feature type="transmembrane region" description="Helical" evidence="1">
    <location>
        <begin position="400"/>
        <end position="420"/>
    </location>
</feature>
<feature type="transmembrane region" description="Helical" evidence="1">
    <location>
        <begin position="439"/>
        <end position="459"/>
    </location>
</feature>
<feature type="transmembrane region" description="Helical" evidence="1">
    <location>
        <begin position="477"/>
        <end position="497"/>
    </location>
</feature>
<feature type="glycosylation site" description="N-linked (GlcNAc...) asparagine" evidence="2">
    <location>
        <position position="79"/>
    </location>
</feature>
<feature type="glycosylation site" description="N-linked (GlcNAc...) asparagine" evidence="2">
    <location>
        <position position="466"/>
    </location>
</feature>
<reference key="1">
    <citation type="submission" date="2005-09" db="EMBL/GenBank/DDBJ databases">
        <title>Annotation of the Aspergillus terreus NIH2624 genome.</title>
        <authorList>
            <person name="Birren B.W."/>
            <person name="Lander E.S."/>
            <person name="Galagan J.E."/>
            <person name="Nusbaum C."/>
            <person name="Devon K."/>
            <person name="Henn M."/>
            <person name="Ma L.-J."/>
            <person name="Jaffe D.B."/>
            <person name="Butler J."/>
            <person name="Alvarez P."/>
            <person name="Gnerre S."/>
            <person name="Grabherr M."/>
            <person name="Kleber M."/>
            <person name="Mauceli E.W."/>
            <person name="Brockman W."/>
            <person name="Rounsley S."/>
            <person name="Young S.K."/>
            <person name="LaButti K."/>
            <person name="Pushparaj V."/>
            <person name="DeCaprio D."/>
            <person name="Crawford M."/>
            <person name="Koehrsen M."/>
            <person name="Engels R."/>
            <person name="Montgomery P."/>
            <person name="Pearson M."/>
            <person name="Howarth C."/>
            <person name="Larson L."/>
            <person name="Luoma S."/>
            <person name="White J."/>
            <person name="Alvarado L."/>
            <person name="Kodira C.D."/>
            <person name="Zeng Q."/>
            <person name="Oleary S."/>
            <person name="Yandava C."/>
            <person name="Denning D.W."/>
            <person name="Nierman W.C."/>
            <person name="Milne T."/>
            <person name="Madden K."/>
        </authorList>
    </citation>
    <scope>NUCLEOTIDE SEQUENCE [LARGE SCALE GENOMIC DNA]</scope>
    <source>
        <strain>NIH 2624 / FGSC A1156</strain>
    </source>
</reference>
<reference key="2">
    <citation type="journal article" date="2014" name="Chem. Biol.">
        <title>Terrein biosynthesis in Aspergillus terreus and its impact on phytotoxicity.</title>
        <authorList>
            <person name="Zaehle C."/>
            <person name="Gressler M."/>
            <person name="Shelest E."/>
            <person name="Geib E."/>
            <person name="Hertweck C."/>
            <person name="Brock M."/>
        </authorList>
    </citation>
    <scope>FUNCTION</scope>
</reference>
<reference key="3">
    <citation type="journal article" date="2015" name="Front. Microbiol.">
        <title>A new high-performance heterologous fungal expression system based on regulatory elements from the Aspergillus terreus terrein gene cluster.</title>
        <authorList>
            <person name="Gressler M."/>
            <person name="Hortschansky P."/>
            <person name="Geib E."/>
            <person name="Brock M."/>
        </authorList>
    </citation>
    <scope>INDUCTION</scope>
</reference>
<keyword id="KW-1003">Cell membrane</keyword>
<keyword id="KW-0325">Glycoprotein</keyword>
<keyword id="KW-0472">Membrane</keyword>
<keyword id="KW-1185">Reference proteome</keyword>
<keyword id="KW-0812">Transmembrane</keyword>
<keyword id="KW-1133">Transmembrane helix</keyword>
<accession>Q0D1P9</accession>
<organism>
    <name type="scientific">Aspergillus terreus (strain NIH 2624 / FGSC A1156)</name>
    <dbReference type="NCBI Taxonomy" id="341663"/>
    <lineage>
        <taxon>Eukaryota</taxon>
        <taxon>Fungi</taxon>
        <taxon>Dikarya</taxon>
        <taxon>Ascomycota</taxon>
        <taxon>Pezizomycotina</taxon>
        <taxon>Eurotiomycetes</taxon>
        <taxon>Eurotiomycetidae</taxon>
        <taxon>Eurotiales</taxon>
        <taxon>Aspergillaceae</taxon>
        <taxon>Aspergillus</taxon>
        <taxon>Aspergillus subgen. Circumdati</taxon>
    </lineage>
</organism>
<gene>
    <name evidence="5" type="primary">terJ</name>
    <name type="ORF">ATEG_00135</name>
</gene>
<sequence>MSRNDVIDDEVHGVHGEYDDSSTLTGSHEDLDVKRPQSLSGEIAFIVVVCMAQLVSQAGLGQVISILPVLGDSFGIGNNMSQLSWFPAAYSLTVGTFILGAGRLGDLYGHKLLFTAGYFWLAIWTLVAAFAESSGPVFFCCCRVLQGIGPAFLLPNGMAILARSYEPGTRKEMVFSAFGSTAPSGFIFGGLVSALAAKYQSWPWGFWFMAILEAVCGIAAIFWVPRTPTPRRETTHSLWARMDIAGCVTGISGLLLFNVALNMAPGARWQDPYIYILLIASLVFFGLFGYIERKAVFPLIPFSAITPDISFVLATLACGWAAFGVWVFYGWEFVQNFRGISPLFACLQFSPAAISGFVASFTTGLILQKLPASVVMMISAAAFCTADTLYATMPIAQSYWAQLFVSIIVMPWGMEMSFPASNILLSNAMPQEHQGVSASLVATIMNYAISLGLGFGAIVETDLNKNGTDLLRGYRGAWYLGVGLAASGIILTMFFALHEYRKSVPMKNKAASREEYLA</sequence>
<proteinExistence type="evidence at transcript level"/>
<name>TERJ_ASPTN</name>
<comment type="function">
    <text evidence="3">Efflux pump that might be required for efficient secretion of terrein or other secondary metabolies produced by the terrein genne cluster (PubMed:24816227).</text>
</comment>
<comment type="subcellular location">
    <subcellularLocation>
        <location evidence="6">Cell membrane</location>
        <topology evidence="1">Multi-pass membrane protein</topology>
    </subcellularLocation>
</comment>
<comment type="induction">
    <text evidence="4">Expression is under the control of the terrein cluster-specific transcription factor terR (PubMed:25852654).</text>
</comment>
<comment type="similarity">
    <text evidence="6">Belongs to the major facilitator superfamily.</text>
</comment>
<evidence type="ECO:0000255" key="1"/>
<evidence type="ECO:0000255" key="2">
    <source>
        <dbReference type="PROSITE-ProRule" id="PRU00498"/>
    </source>
</evidence>
<evidence type="ECO:0000269" key="3">
    <source>
    </source>
</evidence>
<evidence type="ECO:0000269" key="4">
    <source>
    </source>
</evidence>
<evidence type="ECO:0000303" key="5">
    <source>
    </source>
</evidence>
<evidence type="ECO:0000305" key="6"/>
<evidence type="ECO:0000305" key="7">
    <source>
    </source>
</evidence>
<protein>
    <recommendedName>
        <fullName evidence="7">Efflux pump terJ</fullName>
    </recommendedName>
    <alternativeName>
        <fullName evidence="5">Terrein biosynthesis cluster protein terJ</fullName>
    </alternativeName>
</protein>
<dbReference type="EMBL" id="CH476594">
    <property type="protein sequence ID" value="EAU38781.1"/>
    <property type="molecule type" value="Genomic_DNA"/>
</dbReference>
<dbReference type="RefSeq" id="XP_001210221.1">
    <property type="nucleotide sequence ID" value="XM_001210221.1"/>
</dbReference>
<dbReference type="SMR" id="Q0D1P9"/>
<dbReference type="STRING" id="341663.Q0D1P9"/>
<dbReference type="GlyCosmos" id="Q0D1P9">
    <property type="glycosylation" value="2 sites, No reported glycans"/>
</dbReference>
<dbReference type="EnsemblFungi" id="EAU38781">
    <property type="protein sequence ID" value="EAU38781"/>
    <property type="gene ID" value="ATEG_00135"/>
</dbReference>
<dbReference type="GeneID" id="4354892"/>
<dbReference type="VEuPathDB" id="FungiDB:ATEG_00135"/>
<dbReference type="eggNOG" id="KOG0254">
    <property type="taxonomic scope" value="Eukaryota"/>
</dbReference>
<dbReference type="HOGENOM" id="CLU_000960_27_4_1"/>
<dbReference type="OMA" id="GWTLSCI"/>
<dbReference type="OrthoDB" id="2428527at2759"/>
<dbReference type="Proteomes" id="UP000007963">
    <property type="component" value="Unassembled WGS sequence"/>
</dbReference>
<dbReference type="GO" id="GO:0005886">
    <property type="term" value="C:plasma membrane"/>
    <property type="evidence" value="ECO:0007669"/>
    <property type="project" value="UniProtKB-SubCell"/>
</dbReference>
<dbReference type="GO" id="GO:0008519">
    <property type="term" value="F:ammonium channel activity"/>
    <property type="evidence" value="ECO:0007669"/>
    <property type="project" value="EnsemblFungi"/>
</dbReference>
<dbReference type="CDD" id="cd17476">
    <property type="entry name" value="MFS_Amf1_MDR_like"/>
    <property type="match status" value="1"/>
</dbReference>
<dbReference type="Gene3D" id="1.20.1250.20">
    <property type="entry name" value="MFS general substrate transporter like domains"/>
    <property type="match status" value="2"/>
</dbReference>
<dbReference type="InterPro" id="IPR011701">
    <property type="entry name" value="MFS"/>
</dbReference>
<dbReference type="InterPro" id="IPR020846">
    <property type="entry name" value="MFS_dom"/>
</dbReference>
<dbReference type="InterPro" id="IPR036259">
    <property type="entry name" value="MFS_trans_sf"/>
</dbReference>
<dbReference type="PANTHER" id="PTHR42718:SF1">
    <property type="entry name" value="LOW AFFINITY AMMONIUM TRANSPORTER"/>
    <property type="match status" value="1"/>
</dbReference>
<dbReference type="PANTHER" id="PTHR42718">
    <property type="entry name" value="MAJOR FACILITATOR SUPERFAMILY MULTIDRUG TRANSPORTER MFSC"/>
    <property type="match status" value="1"/>
</dbReference>
<dbReference type="Pfam" id="PF07690">
    <property type="entry name" value="MFS_1"/>
    <property type="match status" value="2"/>
</dbReference>
<dbReference type="SUPFAM" id="SSF103473">
    <property type="entry name" value="MFS general substrate transporter"/>
    <property type="match status" value="1"/>
</dbReference>
<dbReference type="PROSITE" id="PS50850">
    <property type="entry name" value="MFS"/>
    <property type="match status" value="1"/>
</dbReference>